<feature type="chain" id="PRO_0000101739" description="Cysteine protease S273R">
    <location>
        <begin position="1"/>
        <end position="273"/>
    </location>
</feature>
<feature type="active site" evidence="1">
    <location>
        <position position="168"/>
    </location>
</feature>
<feature type="active site" evidence="3">
    <location>
        <position position="187"/>
    </location>
</feature>
<feature type="active site" description="Nucleophile" evidence="1">
    <location>
        <position position="232"/>
    </location>
</feature>
<feature type="binding site" evidence="3">
    <location>
        <position position="226"/>
    </location>
    <ligand>
        <name>substrate</name>
    </ligand>
</feature>
<protein>
    <recommendedName>
        <fullName>Cysteine protease S273R</fullName>
        <shortName>pS273R</shortName>
        <ecNumber>3.4.22.-</ecNumber>
    </recommendedName>
</protein>
<accession>Q65228</accession>
<comment type="function">
    <text evidence="2">Cysteine protease that plays several role during infection including processing of the structural polyprotein or inhibition of the host immune response. Catalyzes the maturation of the pp220 and pp62 polyprotein precursors into core-shell proteins. Plays a role in the disruption of host pyroptosis via specific cleavage of gasdermin D/GSDMD. In addition, strongly decreases the host cGAS-STING signaling by targeting IKBKE via its enzymatic activity. Also impairs host FOXJ1-mediated antiviral effect via degradation of FOXJ1.</text>
</comment>
<comment type="subcellular location">
    <subcellularLocation>
        <location evidence="2">Host cytoplasm</location>
    </subcellularLocation>
    <subcellularLocation>
        <location evidence="2">Virion</location>
    </subcellularLocation>
    <text evidence="2">Found in the perinuclear cytoplasmic viral factories during assembly.</text>
</comment>
<comment type="induction">
    <text evidence="4">Expressed in the late phase of the viral replicative cycle.</text>
</comment>
<comment type="similarity">
    <text evidence="4">Belongs to the peptidase C63 family.</text>
</comment>
<keyword id="KW-1035">Host cytoplasm</keyword>
<keyword id="KW-0945">Host-virus interaction</keyword>
<keyword id="KW-0378">Hydrolase</keyword>
<keyword id="KW-1090">Inhibition of host innate immune response by virus</keyword>
<keyword id="KW-0426">Late protein</keyword>
<keyword id="KW-0645">Protease</keyword>
<keyword id="KW-0788">Thiol protease</keyword>
<keyword id="KW-0899">Viral immunoevasion</keyword>
<keyword id="KW-0946">Virion</keyword>
<evidence type="ECO:0000250" key="1"/>
<evidence type="ECO:0000250" key="2">
    <source>
        <dbReference type="UniProtKB" id="Q00946"/>
    </source>
</evidence>
<evidence type="ECO:0000255" key="3"/>
<evidence type="ECO:0000305" key="4"/>
<organism>
    <name type="scientific">African swine fever virus (isolate Tick/Malawi/Lil 20-1/1983)</name>
    <name type="common">ASFV</name>
    <dbReference type="NCBI Taxonomy" id="10500"/>
    <lineage>
        <taxon>Viruses</taxon>
        <taxon>Varidnaviria</taxon>
        <taxon>Bamfordvirae</taxon>
        <taxon>Nucleocytoviricota</taxon>
        <taxon>Pokkesviricetes</taxon>
        <taxon>Asfuvirales</taxon>
        <taxon>Asfarviridae</taxon>
        <taxon>Asfivirus</taxon>
        <taxon>African swine fever virus</taxon>
    </lineage>
</organism>
<organismHost>
    <name type="scientific">Ornithodoros</name>
    <name type="common">relapsing fever ticks</name>
    <dbReference type="NCBI Taxonomy" id="6937"/>
</organismHost>
<organismHost>
    <name type="scientific">Phacochoerus aethiopicus</name>
    <name type="common">Warthog</name>
    <dbReference type="NCBI Taxonomy" id="85517"/>
</organismHost>
<organismHost>
    <name type="scientific">Phacochoerus africanus</name>
    <name type="common">Warthog</name>
    <dbReference type="NCBI Taxonomy" id="41426"/>
</organismHost>
<organismHost>
    <name type="scientific">Potamochoerus larvatus</name>
    <name type="common">Bushpig</name>
    <dbReference type="NCBI Taxonomy" id="273792"/>
</organismHost>
<organismHost>
    <name type="scientific">Sus scrofa</name>
    <name type="common">Pig</name>
    <dbReference type="NCBI Taxonomy" id="9823"/>
</organismHost>
<sequence length="273" mass="31493">MSILEKITSSPSECAEHITNKDSCLSKKIQKELTSFLQKKETLGCDSESCVITHPAVKAYAQQKGLDLSKELETRFKAPGPRNNTGLLTNFNIDETLQRWAIKYTKFFNCPFSMMDFESIHYKFNQVDMAKVYKGEELQYVEGKAVKRPCNTFGCVLNTDFSTGPGKHWVAIFVDMRGDCWSIEYFNSAGNSPPGPVIRWMERVKQQLLKIHHTVKTLAVTNIRHQRSQTECGPYSLFYIRARLDNVSYTHFISTRITDENMYKFRTHLFRIA</sequence>
<reference key="1">
    <citation type="journal article" date="1994" name="J. Gen. Virol.">
        <title>Nucleotide sequence of a 55 kbp region from the right end of the genome of a pathogenic African swine fever virus isolate (Malawi LIL20/1).</title>
        <authorList>
            <person name="Dixon L.K."/>
            <person name="Twigg S.R.F."/>
            <person name="Baylis S.A."/>
            <person name="Vydelingum S."/>
            <person name="Bristow C."/>
            <person name="Hammond J.M."/>
            <person name="Smith G.L."/>
        </authorList>
    </citation>
    <scope>NUCLEOTIDE SEQUENCE [GENOMIC DNA]</scope>
</reference>
<reference key="2">
    <citation type="submission" date="2003-03" db="EMBL/GenBank/DDBJ databases">
        <title>African swine fever virus genomes.</title>
        <authorList>
            <person name="Kutish G.F."/>
            <person name="Rock D.L."/>
        </authorList>
    </citation>
    <scope>NUCLEOTIDE SEQUENCE [LARGE SCALE GENOMIC DNA]</scope>
</reference>
<gene>
    <name type="ordered locus">Mal-119</name>
    <name type="ORF">i6R</name>
</gene>
<dbReference type="EC" id="3.4.22.-"/>
<dbReference type="EMBL" id="X71982">
    <property type="protein sequence ID" value="CAA50819.1"/>
    <property type="molecule type" value="Genomic_DNA"/>
</dbReference>
<dbReference type="EMBL" id="AY261361">
    <property type="status" value="NOT_ANNOTATED_CDS"/>
    <property type="molecule type" value="Genomic_DNA"/>
</dbReference>
<dbReference type="SMR" id="Q65228"/>
<dbReference type="MEROPS" id="C63.001"/>
<dbReference type="Proteomes" id="UP000000860">
    <property type="component" value="Segment"/>
</dbReference>
<dbReference type="GO" id="GO:0030430">
    <property type="term" value="C:host cell cytoplasm"/>
    <property type="evidence" value="ECO:0007669"/>
    <property type="project" value="UniProtKB-SubCell"/>
</dbReference>
<dbReference type="GO" id="GO:0044423">
    <property type="term" value="C:virion component"/>
    <property type="evidence" value="ECO:0007669"/>
    <property type="project" value="UniProtKB-KW"/>
</dbReference>
<dbReference type="GO" id="GO:0004197">
    <property type="term" value="F:cysteine-type endopeptidase activity"/>
    <property type="evidence" value="ECO:0007669"/>
    <property type="project" value="InterPro"/>
</dbReference>
<dbReference type="GO" id="GO:0006508">
    <property type="term" value="P:proteolysis"/>
    <property type="evidence" value="ECO:0007669"/>
    <property type="project" value="UniProtKB-KW"/>
</dbReference>
<dbReference type="GO" id="GO:0052170">
    <property type="term" value="P:symbiont-mediated suppression of host innate immune response"/>
    <property type="evidence" value="ECO:0007669"/>
    <property type="project" value="UniProtKB-KW"/>
</dbReference>
<dbReference type="GO" id="GO:0019082">
    <property type="term" value="P:viral protein processing"/>
    <property type="evidence" value="ECO:0007669"/>
    <property type="project" value="InterPro"/>
</dbReference>
<dbReference type="Gene3D" id="3.40.395.10">
    <property type="entry name" value="Adenoviral Proteinase, Chain A"/>
    <property type="match status" value="1"/>
</dbReference>
<dbReference type="InterPro" id="IPR038765">
    <property type="entry name" value="Papain-like_cys_pep_sf"/>
</dbReference>
<dbReference type="InterPro" id="IPR003653">
    <property type="entry name" value="Peptidase_C48_C"/>
</dbReference>
<dbReference type="InterPro" id="IPR016510">
    <property type="entry name" value="VPRT"/>
</dbReference>
<dbReference type="Pfam" id="PF02902">
    <property type="entry name" value="Peptidase_C48"/>
    <property type="match status" value="1"/>
</dbReference>
<dbReference type="PIRSF" id="PIRSF007159">
    <property type="entry name" value="Peptidase_ASVF"/>
    <property type="match status" value="1"/>
</dbReference>
<dbReference type="SUPFAM" id="SSF54001">
    <property type="entry name" value="Cysteine proteinases"/>
    <property type="match status" value="1"/>
</dbReference>
<name>VPRT_ASFM2</name>
<proteinExistence type="inferred from homology"/>